<comment type="function">
    <text evidence="2">Cell envelope protein involved in phase variation, confers opaque colony phenotype.</text>
</comment>
<comment type="subcellular location">
    <subcellularLocation>
        <location evidence="2">Secreted</location>
    </subcellularLocation>
</comment>
<comment type="induction">
    <text evidence="2">Undergoes phase variation.</text>
</comment>
<comment type="disruption phenotype">
    <text evidence="2">Loss of the ability to colonize the nasopharynx of infant rats.</text>
</comment>
<comment type="similarity">
    <text evidence="3">Belongs to the OapA family.</text>
</comment>
<keyword id="KW-1185">Reference proteome</keyword>
<keyword id="KW-0964">Secreted</keyword>
<keyword id="KW-0843">Virulence</keyword>
<feature type="chain" id="PRO_0000058016" description="Opacity-associated protein OapA">
    <location>
        <begin position="1"/>
        <end position="431"/>
    </location>
</feature>
<feature type="region of interest" description="Disordered" evidence="1">
    <location>
        <begin position="1"/>
        <end position="98"/>
    </location>
</feature>
<feature type="compositionally biased region" description="Polar residues" evidence="1">
    <location>
        <begin position="1"/>
        <end position="14"/>
    </location>
</feature>
<feature type="compositionally biased region" description="Polar residues" evidence="1">
    <location>
        <begin position="86"/>
        <end position="95"/>
    </location>
</feature>
<proteinExistence type="evidence at transcript level"/>
<accession>P44415</accession>
<dbReference type="EMBL" id="U17037">
    <property type="protein sequence ID" value="AAA56761.1"/>
    <property type="molecule type" value="Genomic_DNA"/>
</dbReference>
<dbReference type="EMBL" id="L42023">
    <property type="protein sequence ID" value="AAC21992.1"/>
    <property type="molecule type" value="Genomic_DNA"/>
</dbReference>
<dbReference type="PIR" id="A64062">
    <property type="entry name" value="A64062"/>
</dbReference>
<dbReference type="RefSeq" id="NP_438494.1">
    <property type="nucleotide sequence ID" value="NC_000907.1"/>
</dbReference>
<dbReference type="SMR" id="P44415"/>
<dbReference type="STRING" id="71421.HI_0330"/>
<dbReference type="EnsemblBacteria" id="AAC21992">
    <property type="protein sequence ID" value="AAC21992"/>
    <property type="gene ID" value="HI_0330"/>
</dbReference>
<dbReference type="KEGG" id="hin:HI_0330"/>
<dbReference type="PATRIC" id="fig|71421.8.peg.347"/>
<dbReference type="eggNOG" id="COG3061">
    <property type="taxonomic scope" value="Bacteria"/>
</dbReference>
<dbReference type="eggNOG" id="COG3266">
    <property type="taxonomic scope" value="Bacteria"/>
</dbReference>
<dbReference type="HOGENOM" id="CLU_602387_0_0_6"/>
<dbReference type="OrthoDB" id="6398769at2"/>
<dbReference type="BioCyc" id="HINF71421:G1GJ1-346-MONOMER"/>
<dbReference type="Proteomes" id="UP000000579">
    <property type="component" value="Chromosome"/>
</dbReference>
<dbReference type="GO" id="GO:0005576">
    <property type="term" value="C:extracellular region"/>
    <property type="evidence" value="ECO:0007669"/>
    <property type="project" value="UniProtKB-SubCell"/>
</dbReference>
<dbReference type="GO" id="GO:0004222">
    <property type="term" value="F:metalloendopeptidase activity"/>
    <property type="evidence" value="ECO:0000318"/>
    <property type="project" value="GO_Central"/>
</dbReference>
<dbReference type="GO" id="GO:0042834">
    <property type="term" value="F:peptidoglycan binding"/>
    <property type="evidence" value="ECO:0007669"/>
    <property type="project" value="InterPro"/>
</dbReference>
<dbReference type="InterPro" id="IPR007340">
    <property type="entry name" value="LysM_Opacity-associatedA"/>
</dbReference>
<dbReference type="InterPro" id="IPR013731">
    <property type="entry name" value="OapA_N"/>
</dbReference>
<dbReference type="NCBIfam" id="NF033909">
    <property type="entry name" value="opacity_OapA"/>
    <property type="match status" value="1"/>
</dbReference>
<dbReference type="Pfam" id="PF04225">
    <property type="entry name" value="LysM_OapA"/>
    <property type="match status" value="1"/>
</dbReference>
<dbReference type="Pfam" id="PF08525">
    <property type="entry name" value="OapA_N"/>
    <property type="match status" value="1"/>
</dbReference>
<organism>
    <name type="scientific">Haemophilus influenzae (strain ATCC 51907 / DSM 11121 / KW20 / Rd)</name>
    <dbReference type="NCBI Taxonomy" id="71421"/>
    <lineage>
        <taxon>Bacteria</taxon>
        <taxon>Pseudomonadati</taxon>
        <taxon>Pseudomonadota</taxon>
        <taxon>Gammaproteobacteria</taxon>
        <taxon>Pasteurellales</taxon>
        <taxon>Pasteurellaceae</taxon>
        <taxon>Haemophilus</taxon>
    </lineage>
</organism>
<evidence type="ECO:0000256" key="1">
    <source>
        <dbReference type="SAM" id="MobiDB-lite"/>
    </source>
</evidence>
<evidence type="ECO:0000269" key="2">
    <source>
    </source>
</evidence>
<evidence type="ECO:0000305" key="3"/>
<sequence>MNSMDKNQQSSQNELDLGLNQEPITPKKTIQPSSSILGKAKGLFAKKNHVQTNFQQRKEPTFGDSSTQENDPLIPSENLKKVQKPVLQTSSTEENISAVDEEISAENNADEPVEKAEKPILAQPEKWKILQVLPAKHRRLFMAIFVLVILLIIFFALKPSSDTVESFTQSNSNEVPVQFQSLDQSQPLETTILDNPPAQNQMAVEQANQSEFAPKAEEAANNTTAQNPLVENAPMQQNVVQSPSQMPNEMAAASVAPMQPAQAEQPKATVPVQPMKKAVEPQVAHKDTVKKEVKVAEKAQAPAKATEQNVAKTAGNAPIVEAKPVQAKKEKKVQIVDAKPVSKSTASRLSAKTLTVPKGVSLMQLFRDNQLNISDVNAMSKATGAGNVLSSFKSGDKVTVSVNNQGRVNEMRLSNGARFVRQSDGSYQYKK</sequence>
<name>OAPA_HAEIN</name>
<protein>
    <recommendedName>
        <fullName>Opacity-associated protein OapA</fullName>
    </recommendedName>
</protein>
<gene>
    <name type="primary">oapA</name>
    <name type="ordered locus">HI_0330</name>
</gene>
<reference key="1">
    <citation type="journal article" date="1995" name="Mol. Microbiol.">
        <title>Identification and characterization of a cell envelope protein of Haemophilus influenzae contributing to phase variation in colony opacity and nasopharyngeal colonization.</title>
        <authorList>
            <person name="Weiser J.N."/>
            <person name="Chong S.T."/>
            <person name="Greenberg D."/>
            <person name="Fong W."/>
        </authorList>
    </citation>
    <scope>NUCLEOTIDE SEQUENCE [GENOMIC DNA]</scope>
    <scope>FUNCTION</scope>
    <scope>SUBCELLULAR LOCATION</scope>
    <scope>INDUCTION</scope>
    <scope>DISRUPTION PHENOTYPE</scope>
    <source>
        <strain>Rd / H175</strain>
    </source>
</reference>
<reference key="2">
    <citation type="journal article" date="1995" name="Science">
        <title>Whole-genome random sequencing and assembly of Haemophilus influenzae Rd.</title>
        <authorList>
            <person name="Fleischmann R.D."/>
            <person name="Adams M.D."/>
            <person name="White O."/>
            <person name="Clayton R.A."/>
            <person name="Kirkness E.F."/>
            <person name="Kerlavage A.R."/>
            <person name="Bult C.J."/>
            <person name="Tomb J.-F."/>
            <person name="Dougherty B.A."/>
            <person name="Merrick J.M."/>
            <person name="McKenney K."/>
            <person name="Sutton G.G."/>
            <person name="FitzHugh W."/>
            <person name="Fields C.A."/>
            <person name="Gocayne J.D."/>
            <person name="Scott J.D."/>
            <person name="Shirley R."/>
            <person name="Liu L.-I."/>
            <person name="Glodek A."/>
            <person name="Kelley J.M."/>
            <person name="Weidman J.F."/>
            <person name="Phillips C.A."/>
            <person name="Spriggs T."/>
            <person name="Hedblom E."/>
            <person name="Cotton M.D."/>
            <person name="Utterback T.R."/>
            <person name="Hanna M.C."/>
            <person name="Nguyen D.T."/>
            <person name="Saudek D.M."/>
            <person name="Brandon R.C."/>
            <person name="Fine L.D."/>
            <person name="Fritchman J.L."/>
            <person name="Fuhrmann J.L."/>
            <person name="Geoghagen N.S.M."/>
            <person name="Gnehm C.L."/>
            <person name="McDonald L.A."/>
            <person name="Small K.V."/>
            <person name="Fraser C.M."/>
            <person name="Smith H.O."/>
            <person name="Venter J.C."/>
        </authorList>
    </citation>
    <scope>NUCLEOTIDE SEQUENCE [LARGE SCALE GENOMIC DNA]</scope>
    <source>
        <strain>ATCC 51907 / DSM 11121 / KW20 / Rd</strain>
    </source>
</reference>